<keyword id="KW-0997">Cell inner membrane</keyword>
<keyword id="KW-1003">Cell membrane</keyword>
<keyword id="KW-0406">Ion transport</keyword>
<keyword id="KW-0472">Membrane</keyword>
<keyword id="KW-0520">NAD</keyword>
<keyword id="KW-1185">Reference proteome</keyword>
<keyword id="KW-0915">Sodium</keyword>
<keyword id="KW-0739">Sodium transport</keyword>
<keyword id="KW-1278">Translocase</keyword>
<keyword id="KW-0812">Transmembrane</keyword>
<keyword id="KW-1133">Transmembrane helix</keyword>
<keyword id="KW-0813">Transport</keyword>
<keyword id="KW-0830">Ubiquinone</keyword>
<accession>A1SSY7</accession>
<proteinExistence type="inferred from homology"/>
<feature type="chain" id="PRO_1000060214" description="Na(+)-translocating NADH-quinone reductase subunit E">
    <location>
        <begin position="1"/>
        <end position="202"/>
    </location>
</feature>
<feature type="transmembrane region" description="Helical" evidence="1">
    <location>
        <begin position="11"/>
        <end position="31"/>
    </location>
</feature>
<feature type="transmembrane region" description="Helical" evidence="1">
    <location>
        <begin position="41"/>
        <end position="61"/>
    </location>
</feature>
<feature type="transmembrane region" description="Helical" evidence="1">
    <location>
        <begin position="81"/>
        <end position="101"/>
    </location>
</feature>
<feature type="transmembrane region" description="Helical" evidence="1">
    <location>
        <begin position="114"/>
        <end position="134"/>
    </location>
</feature>
<feature type="transmembrane region" description="Helical" evidence="1">
    <location>
        <begin position="144"/>
        <end position="164"/>
    </location>
</feature>
<feature type="transmembrane region" description="Helical" evidence="1">
    <location>
        <begin position="180"/>
        <end position="200"/>
    </location>
</feature>
<gene>
    <name evidence="1" type="primary">nqrE</name>
    <name type="ordered locus">Ping_0750</name>
</gene>
<dbReference type="EC" id="7.2.1.1" evidence="1"/>
<dbReference type="EMBL" id="CP000510">
    <property type="protein sequence ID" value="ABM02602.1"/>
    <property type="molecule type" value="Genomic_DNA"/>
</dbReference>
<dbReference type="RefSeq" id="WP_011769161.1">
    <property type="nucleotide sequence ID" value="NC_008709.1"/>
</dbReference>
<dbReference type="SMR" id="A1SSY7"/>
<dbReference type="STRING" id="357804.Ping_0750"/>
<dbReference type="KEGG" id="pin:Ping_0750"/>
<dbReference type="eggNOG" id="COG2209">
    <property type="taxonomic scope" value="Bacteria"/>
</dbReference>
<dbReference type="HOGENOM" id="CLU_095255_0_0_6"/>
<dbReference type="OrthoDB" id="9803631at2"/>
<dbReference type="Proteomes" id="UP000000639">
    <property type="component" value="Chromosome"/>
</dbReference>
<dbReference type="GO" id="GO:0009276">
    <property type="term" value="C:Gram-negative-bacterium-type cell wall"/>
    <property type="evidence" value="ECO:0007669"/>
    <property type="project" value="InterPro"/>
</dbReference>
<dbReference type="GO" id="GO:0005886">
    <property type="term" value="C:plasma membrane"/>
    <property type="evidence" value="ECO:0007669"/>
    <property type="project" value="UniProtKB-SubCell"/>
</dbReference>
<dbReference type="GO" id="GO:0016655">
    <property type="term" value="F:oxidoreductase activity, acting on NAD(P)H, quinone or similar compound as acceptor"/>
    <property type="evidence" value="ECO:0007669"/>
    <property type="project" value="UniProtKB-UniRule"/>
</dbReference>
<dbReference type="GO" id="GO:0022904">
    <property type="term" value="P:respiratory electron transport chain"/>
    <property type="evidence" value="ECO:0007669"/>
    <property type="project" value="InterPro"/>
</dbReference>
<dbReference type="GO" id="GO:0006814">
    <property type="term" value="P:sodium ion transport"/>
    <property type="evidence" value="ECO:0007669"/>
    <property type="project" value="UniProtKB-UniRule"/>
</dbReference>
<dbReference type="HAMAP" id="MF_00429">
    <property type="entry name" value="NqrE"/>
    <property type="match status" value="1"/>
</dbReference>
<dbReference type="InterPro" id="IPR003667">
    <property type="entry name" value="NqrDE/RnfAE"/>
</dbReference>
<dbReference type="InterPro" id="IPR050133">
    <property type="entry name" value="NqrDE/RnfAE_oxidrdctase"/>
</dbReference>
<dbReference type="InterPro" id="IPR010967">
    <property type="entry name" value="NqrE"/>
</dbReference>
<dbReference type="NCBIfam" id="TIGR01940">
    <property type="entry name" value="nqrE"/>
    <property type="match status" value="1"/>
</dbReference>
<dbReference type="PANTHER" id="PTHR30335">
    <property type="entry name" value="INTEGRAL MEMBRANE PROTEIN OF SOXR-REDUCING COMPLEX"/>
    <property type="match status" value="1"/>
</dbReference>
<dbReference type="PANTHER" id="PTHR30335:SF1">
    <property type="entry name" value="NA(+)-TRANSLOCATING NADH-QUINONE REDUCTASE SUBUNIT E"/>
    <property type="match status" value="1"/>
</dbReference>
<dbReference type="Pfam" id="PF02508">
    <property type="entry name" value="Rnf-Nqr"/>
    <property type="match status" value="1"/>
</dbReference>
<dbReference type="PIRSF" id="PIRSF006102">
    <property type="entry name" value="NQR_DE"/>
    <property type="match status" value="1"/>
</dbReference>
<evidence type="ECO:0000255" key="1">
    <source>
        <dbReference type="HAMAP-Rule" id="MF_00429"/>
    </source>
</evidence>
<protein>
    <recommendedName>
        <fullName evidence="1">Na(+)-translocating NADH-quinone reductase subunit E</fullName>
        <shortName evidence="1">Na(+)-NQR subunit E</shortName>
        <shortName evidence="1">Na(+)-translocating NQR subunit E</shortName>
        <ecNumber evidence="1">7.2.1.1</ecNumber>
    </recommendedName>
    <alternativeName>
        <fullName evidence="1">NQR complex subunit E</fullName>
    </alternativeName>
    <alternativeName>
        <fullName evidence="1">NQR-1 subunit E</fullName>
    </alternativeName>
</protein>
<sequence>MEHYISIFVRSIFMENMALAFFLGMCTFLAVSKKVKTSMGLGVAVIVVLGISVPVNQIIYFNLLAPGALAWAGFPAADLSFLGFITFIGVIAALVQILEMVLDKYFPALYQALGIYLPLITVNCAILGGVLFMVQREYNLMESLVYGVGSGVGWMLAIVLLAGIREKMKYSDVPAGLRGLGITFTTAGLMAIAFMSFSGIQL</sequence>
<name>NQRE_PSYIN</name>
<comment type="function">
    <text evidence="1">NQR complex catalyzes the reduction of ubiquinone-1 to ubiquinol by two successive reactions, coupled with the transport of Na(+) ions from the cytoplasm to the periplasm. NqrA to NqrE are probably involved in the second step, the conversion of ubisemiquinone to ubiquinol.</text>
</comment>
<comment type="catalytic activity">
    <reaction evidence="1">
        <text>a ubiquinone + n Na(+)(in) + NADH + H(+) = a ubiquinol + n Na(+)(out) + NAD(+)</text>
        <dbReference type="Rhea" id="RHEA:47748"/>
        <dbReference type="Rhea" id="RHEA-COMP:9565"/>
        <dbReference type="Rhea" id="RHEA-COMP:9566"/>
        <dbReference type="ChEBI" id="CHEBI:15378"/>
        <dbReference type="ChEBI" id="CHEBI:16389"/>
        <dbReference type="ChEBI" id="CHEBI:17976"/>
        <dbReference type="ChEBI" id="CHEBI:29101"/>
        <dbReference type="ChEBI" id="CHEBI:57540"/>
        <dbReference type="ChEBI" id="CHEBI:57945"/>
        <dbReference type="EC" id="7.2.1.1"/>
    </reaction>
</comment>
<comment type="subunit">
    <text evidence="1">Composed of six subunits; NqrA, NqrB, NqrC, NqrD, NqrE and NqrF.</text>
</comment>
<comment type="subcellular location">
    <subcellularLocation>
        <location evidence="1">Cell inner membrane</location>
        <topology evidence="1">Multi-pass membrane protein</topology>
    </subcellularLocation>
</comment>
<comment type="similarity">
    <text evidence="1">Belongs to the NqrDE/RnfAE family.</text>
</comment>
<reference key="1">
    <citation type="journal article" date="2008" name="BMC Genomics">
        <title>Genomics of an extreme psychrophile, Psychromonas ingrahamii.</title>
        <authorList>
            <person name="Riley M."/>
            <person name="Staley J.T."/>
            <person name="Danchin A."/>
            <person name="Wang T.Z."/>
            <person name="Brettin T.S."/>
            <person name="Hauser L.J."/>
            <person name="Land M.L."/>
            <person name="Thompson L.S."/>
        </authorList>
    </citation>
    <scope>NUCLEOTIDE SEQUENCE [LARGE SCALE GENOMIC DNA]</scope>
    <source>
        <strain>DSM 17664 / CCUG 51855 / 37</strain>
    </source>
</reference>
<organism>
    <name type="scientific">Psychromonas ingrahamii (strain DSM 17664 / CCUG 51855 / 37)</name>
    <dbReference type="NCBI Taxonomy" id="357804"/>
    <lineage>
        <taxon>Bacteria</taxon>
        <taxon>Pseudomonadati</taxon>
        <taxon>Pseudomonadota</taxon>
        <taxon>Gammaproteobacteria</taxon>
        <taxon>Alteromonadales</taxon>
        <taxon>Psychromonadaceae</taxon>
        <taxon>Psychromonas</taxon>
    </lineage>
</organism>